<accession>Q122Q4</accession>
<keyword id="KW-0030">Aminoacyl-tRNA synthetase</keyword>
<keyword id="KW-0067">ATP-binding</keyword>
<keyword id="KW-0963">Cytoplasm</keyword>
<keyword id="KW-0436">Ligase</keyword>
<keyword id="KW-0547">Nucleotide-binding</keyword>
<keyword id="KW-0648">Protein biosynthesis</keyword>
<keyword id="KW-1185">Reference proteome</keyword>
<protein>
    <recommendedName>
        <fullName evidence="1">Leucine--tRNA ligase</fullName>
        <ecNumber evidence="1">6.1.1.4</ecNumber>
    </recommendedName>
    <alternativeName>
        <fullName evidence="1">Leucyl-tRNA synthetase</fullName>
        <shortName evidence="1">LeuRS</shortName>
    </alternativeName>
</protein>
<name>SYL_POLSJ</name>
<evidence type="ECO:0000255" key="1">
    <source>
        <dbReference type="HAMAP-Rule" id="MF_00049"/>
    </source>
</evidence>
<sequence length="886" mass="98358">MQDKYNHLDVERSAQAQWIAADAYRVTEDTSGKKPRGKYYACSMLPYPSGKLHMGHVRNYTINDMLTRYLRMKGYNVLMPMGWDAFGLPAENAAMKNGVPPAQWTYDNIAYMKKQMQAMGLAIDWSREVATCDPSYYKWNQWLFLKMLEKGIAYRKTQVVNWDPVDQTVLANEQVIDGKGWRTGATVEKREIPGYYLKITDYAEELLGHVQHQLPGWPERVRLMQENWIGKSEGVRFAFTHDIRDASGALIGGGKMYVFTTRADTIMGVTFCAVAPEHPLALHAAALNPQLAAFIEECKAGGTTEAELATQEKKGKPTGLFVTHPLTGEQVEVWVGNYVLMSYGDGAVMGVPAHDERDFEFAKKYGLPIKQVTDVKGQAYSLEAWADWYGDKQQGVAINSDKYDGLGLKACVDAVAADLAAKGLGEKKTTWRLRDWGVSRQRYWGTPIPIIHCDEHGAVPVPEKDLPVVLPQDCVPDGSGNPLHRHEGFHAGVVCPVCGKPARRETDTMDTFVDSSWYYMRYCDPKNDQQMVAGGADYWMPMDQYIGGIEHAILHLLYARFWTKVMRDLGLVKIDEPFTKLLTQGMVLNHIYSRKGDKGGIEYFWPSEVEDIHDAAGKVTGAKRKSDGLLVNYEGVGTMSKSKNNGVDPQDLIERYGADTARLYTMFTAPPEATLEWNDAAVEGSYRFLRRVWNFGVKLSAAKTAAAAAQAAGFVAEYGKEAKELRREIHTVLKQIDYDYQRMQYNTVVSGNMKLLNALENFTNDGAAGSHKALHESFGILLRCLYPATPHLAHALWSELGYAAQQGDLLDAPWPEVDSGALQQDVIELVLQVNGKLRGSVTVPAGADKATIEAAALASEAFLKQAAGAPAKKVIVVPGRLVNIVV</sequence>
<gene>
    <name evidence="1" type="primary">leuS</name>
    <name type="ordered locus">Bpro_4605</name>
</gene>
<feature type="chain" id="PRO_1000009391" description="Leucine--tRNA ligase">
    <location>
        <begin position="1"/>
        <end position="886"/>
    </location>
</feature>
<feature type="short sequence motif" description="'HIGH' region">
    <location>
        <begin position="46"/>
        <end position="56"/>
    </location>
</feature>
<feature type="short sequence motif" description="'KMSKS' region">
    <location>
        <begin position="638"/>
        <end position="642"/>
    </location>
</feature>
<feature type="binding site" evidence="1">
    <location>
        <position position="641"/>
    </location>
    <ligand>
        <name>ATP</name>
        <dbReference type="ChEBI" id="CHEBI:30616"/>
    </ligand>
</feature>
<comment type="catalytic activity">
    <reaction evidence="1">
        <text>tRNA(Leu) + L-leucine + ATP = L-leucyl-tRNA(Leu) + AMP + diphosphate</text>
        <dbReference type="Rhea" id="RHEA:11688"/>
        <dbReference type="Rhea" id="RHEA-COMP:9613"/>
        <dbReference type="Rhea" id="RHEA-COMP:9622"/>
        <dbReference type="ChEBI" id="CHEBI:30616"/>
        <dbReference type="ChEBI" id="CHEBI:33019"/>
        <dbReference type="ChEBI" id="CHEBI:57427"/>
        <dbReference type="ChEBI" id="CHEBI:78442"/>
        <dbReference type="ChEBI" id="CHEBI:78494"/>
        <dbReference type="ChEBI" id="CHEBI:456215"/>
        <dbReference type="EC" id="6.1.1.4"/>
    </reaction>
</comment>
<comment type="subcellular location">
    <subcellularLocation>
        <location evidence="1">Cytoplasm</location>
    </subcellularLocation>
</comment>
<comment type="similarity">
    <text evidence="1">Belongs to the class-I aminoacyl-tRNA synthetase family.</text>
</comment>
<organism>
    <name type="scientific">Polaromonas sp. (strain JS666 / ATCC BAA-500)</name>
    <dbReference type="NCBI Taxonomy" id="296591"/>
    <lineage>
        <taxon>Bacteria</taxon>
        <taxon>Pseudomonadati</taxon>
        <taxon>Pseudomonadota</taxon>
        <taxon>Betaproteobacteria</taxon>
        <taxon>Burkholderiales</taxon>
        <taxon>Comamonadaceae</taxon>
        <taxon>Polaromonas</taxon>
    </lineage>
</organism>
<proteinExistence type="inferred from homology"/>
<dbReference type="EC" id="6.1.1.4" evidence="1"/>
<dbReference type="EMBL" id="CP000316">
    <property type="protein sequence ID" value="ABE46488.1"/>
    <property type="molecule type" value="Genomic_DNA"/>
</dbReference>
<dbReference type="RefSeq" id="WP_011485475.1">
    <property type="nucleotide sequence ID" value="NC_007948.1"/>
</dbReference>
<dbReference type="SMR" id="Q122Q4"/>
<dbReference type="STRING" id="296591.Bpro_4605"/>
<dbReference type="KEGG" id="pol:Bpro_4605"/>
<dbReference type="eggNOG" id="COG0495">
    <property type="taxonomic scope" value="Bacteria"/>
</dbReference>
<dbReference type="HOGENOM" id="CLU_004427_0_0_4"/>
<dbReference type="OrthoDB" id="9810365at2"/>
<dbReference type="Proteomes" id="UP000001983">
    <property type="component" value="Chromosome"/>
</dbReference>
<dbReference type="GO" id="GO:0005829">
    <property type="term" value="C:cytosol"/>
    <property type="evidence" value="ECO:0007669"/>
    <property type="project" value="TreeGrafter"/>
</dbReference>
<dbReference type="GO" id="GO:0002161">
    <property type="term" value="F:aminoacyl-tRNA deacylase activity"/>
    <property type="evidence" value="ECO:0007669"/>
    <property type="project" value="InterPro"/>
</dbReference>
<dbReference type="GO" id="GO:0005524">
    <property type="term" value="F:ATP binding"/>
    <property type="evidence" value="ECO:0007669"/>
    <property type="project" value="UniProtKB-UniRule"/>
</dbReference>
<dbReference type="GO" id="GO:0004823">
    <property type="term" value="F:leucine-tRNA ligase activity"/>
    <property type="evidence" value="ECO:0007669"/>
    <property type="project" value="UniProtKB-UniRule"/>
</dbReference>
<dbReference type="GO" id="GO:0006429">
    <property type="term" value="P:leucyl-tRNA aminoacylation"/>
    <property type="evidence" value="ECO:0007669"/>
    <property type="project" value="UniProtKB-UniRule"/>
</dbReference>
<dbReference type="CDD" id="cd07958">
    <property type="entry name" value="Anticodon_Ia_Leu_BEm"/>
    <property type="match status" value="1"/>
</dbReference>
<dbReference type="CDD" id="cd00812">
    <property type="entry name" value="LeuRS_core"/>
    <property type="match status" value="1"/>
</dbReference>
<dbReference type="FunFam" id="1.10.730.10:FF:000003">
    <property type="entry name" value="Leucine--tRNA ligase"/>
    <property type="match status" value="1"/>
</dbReference>
<dbReference type="FunFam" id="3.40.50.620:FF:000003">
    <property type="entry name" value="Leucine--tRNA ligase"/>
    <property type="match status" value="1"/>
</dbReference>
<dbReference type="FunFam" id="3.40.50.620:FF:000056">
    <property type="entry name" value="Leucine--tRNA ligase"/>
    <property type="match status" value="1"/>
</dbReference>
<dbReference type="FunFam" id="3.90.740.10:FF:000012">
    <property type="entry name" value="Leucine--tRNA ligase"/>
    <property type="match status" value="1"/>
</dbReference>
<dbReference type="Gene3D" id="2.20.28.290">
    <property type="match status" value="1"/>
</dbReference>
<dbReference type="Gene3D" id="3.10.20.590">
    <property type="match status" value="1"/>
</dbReference>
<dbReference type="Gene3D" id="3.40.50.620">
    <property type="entry name" value="HUPs"/>
    <property type="match status" value="2"/>
</dbReference>
<dbReference type="Gene3D" id="1.10.730.10">
    <property type="entry name" value="Isoleucyl-tRNA Synthetase, Domain 1"/>
    <property type="match status" value="2"/>
</dbReference>
<dbReference type="HAMAP" id="MF_00049_B">
    <property type="entry name" value="Leu_tRNA_synth_B"/>
    <property type="match status" value="1"/>
</dbReference>
<dbReference type="InterPro" id="IPR001412">
    <property type="entry name" value="aa-tRNA-synth_I_CS"/>
</dbReference>
<dbReference type="InterPro" id="IPR002300">
    <property type="entry name" value="aa-tRNA-synth_Ia"/>
</dbReference>
<dbReference type="InterPro" id="IPR002302">
    <property type="entry name" value="Leu-tRNA-ligase"/>
</dbReference>
<dbReference type="InterPro" id="IPR025709">
    <property type="entry name" value="Leu_tRNA-synth_edit"/>
</dbReference>
<dbReference type="InterPro" id="IPR013155">
    <property type="entry name" value="M/V/L/I-tRNA-synth_anticd-bd"/>
</dbReference>
<dbReference type="InterPro" id="IPR015413">
    <property type="entry name" value="Methionyl/Leucyl_tRNA_Synth"/>
</dbReference>
<dbReference type="InterPro" id="IPR014729">
    <property type="entry name" value="Rossmann-like_a/b/a_fold"/>
</dbReference>
<dbReference type="InterPro" id="IPR009080">
    <property type="entry name" value="tRNAsynth_Ia_anticodon-bd"/>
</dbReference>
<dbReference type="InterPro" id="IPR009008">
    <property type="entry name" value="Val/Leu/Ile-tRNA-synth_edit"/>
</dbReference>
<dbReference type="NCBIfam" id="TIGR00396">
    <property type="entry name" value="leuS_bact"/>
    <property type="match status" value="1"/>
</dbReference>
<dbReference type="PANTHER" id="PTHR43740:SF2">
    <property type="entry name" value="LEUCINE--TRNA LIGASE, MITOCHONDRIAL"/>
    <property type="match status" value="1"/>
</dbReference>
<dbReference type="PANTHER" id="PTHR43740">
    <property type="entry name" value="LEUCYL-TRNA SYNTHETASE"/>
    <property type="match status" value="1"/>
</dbReference>
<dbReference type="Pfam" id="PF08264">
    <property type="entry name" value="Anticodon_1"/>
    <property type="match status" value="1"/>
</dbReference>
<dbReference type="Pfam" id="PF00133">
    <property type="entry name" value="tRNA-synt_1"/>
    <property type="match status" value="2"/>
</dbReference>
<dbReference type="Pfam" id="PF13603">
    <property type="entry name" value="tRNA-synt_1_2"/>
    <property type="match status" value="1"/>
</dbReference>
<dbReference type="Pfam" id="PF09334">
    <property type="entry name" value="tRNA-synt_1g"/>
    <property type="match status" value="1"/>
</dbReference>
<dbReference type="PRINTS" id="PR00985">
    <property type="entry name" value="TRNASYNTHLEU"/>
</dbReference>
<dbReference type="SUPFAM" id="SSF47323">
    <property type="entry name" value="Anticodon-binding domain of a subclass of class I aminoacyl-tRNA synthetases"/>
    <property type="match status" value="1"/>
</dbReference>
<dbReference type="SUPFAM" id="SSF52374">
    <property type="entry name" value="Nucleotidylyl transferase"/>
    <property type="match status" value="1"/>
</dbReference>
<dbReference type="SUPFAM" id="SSF50677">
    <property type="entry name" value="ValRS/IleRS/LeuRS editing domain"/>
    <property type="match status" value="1"/>
</dbReference>
<dbReference type="PROSITE" id="PS00178">
    <property type="entry name" value="AA_TRNA_LIGASE_I"/>
    <property type="match status" value="1"/>
</dbReference>
<reference key="1">
    <citation type="journal article" date="2008" name="Appl. Environ. Microbiol.">
        <title>The genome of Polaromonas sp. strain JS666: insights into the evolution of a hydrocarbon- and xenobiotic-degrading bacterium, and features of relevance to biotechnology.</title>
        <authorList>
            <person name="Mattes T.E."/>
            <person name="Alexander A.K."/>
            <person name="Richardson P.M."/>
            <person name="Munk A.C."/>
            <person name="Han C.S."/>
            <person name="Stothard P."/>
            <person name="Coleman N.V."/>
        </authorList>
    </citation>
    <scope>NUCLEOTIDE SEQUENCE [LARGE SCALE GENOMIC DNA]</scope>
    <source>
        <strain>JS666 / ATCC BAA-500</strain>
    </source>
</reference>